<keyword id="KW-1003">Cell membrane</keyword>
<keyword id="KW-0210">Decarboxylase</keyword>
<keyword id="KW-0444">Lipid biosynthesis</keyword>
<keyword id="KW-0443">Lipid metabolism</keyword>
<keyword id="KW-0456">Lyase</keyword>
<keyword id="KW-0472">Membrane</keyword>
<keyword id="KW-0594">Phospholipid biosynthesis</keyword>
<keyword id="KW-1208">Phospholipid metabolism</keyword>
<keyword id="KW-0670">Pyruvate</keyword>
<keyword id="KW-1185">Reference proteome</keyword>
<keyword id="KW-0865">Zymogen</keyword>
<reference key="1">
    <citation type="journal article" date="2009" name="PLoS Genet.">
        <title>Organised genome dynamics in the Escherichia coli species results in highly diverse adaptive paths.</title>
        <authorList>
            <person name="Touchon M."/>
            <person name="Hoede C."/>
            <person name="Tenaillon O."/>
            <person name="Barbe V."/>
            <person name="Baeriswyl S."/>
            <person name="Bidet P."/>
            <person name="Bingen E."/>
            <person name="Bonacorsi S."/>
            <person name="Bouchier C."/>
            <person name="Bouvet O."/>
            <person name="Calteau A."/>
            <person name="Chiapello H."/>
            <person name="Clermont O."/>
            <person name="Cruveiller S."/>
            <person name="Danchin A."/>
            <person name="Diard M."/>
            <person name="Dossat C."/>
            <person name="Karoui M.E."/>
            <person name="Frapy E."/>
            <person name="Garry L."/>
            <person name="Ghigo J.M."/>
            <person name="Gilles A.M."/>
            <person name="Johnson J."/>
            <person name="Le Bouguenec C."/>
            <person name="Lescat M."/>
            <person name="Mangenot S."/>
            <person name="Martinez-Jehanne V."/>
            <person name="Matic I."/>
            <person name="Nassif X."/>
            <person name="Oztas S."/>
            <person name="Petit M.A."/>
            <person name="Pichon C."/>
            <person name="Rouy Z."/>
            <person name="Ruf C.S."/>
            <person name="Schneider D."/>
            <person name="Tourret J."/>
            <person name="Vacherie B."/>
            <person name="Vallenet D."/>
            <person name="Medigue C."/>
            <person name="Rocha E.P.C."/>
            <person name="Denamur E."/>
        </authorList>
    </citation>
    <scope>NUCLEOTIDE SEQUENCE [LARGE SCALE GENOMIC DNA]</scope>
    <source>
        <strain>55989 / EAEC</strain>
    </source>
</reference>
<comment type="function">
    <text evidence="1">Catalyzes the formation of phosphatidylethanolamine (PtdEtn) from phosphatidylserine (PtdSer).</text>
</comment>
<comment type="catalytic activity">
    <reaction evidence="1">
        <text>a 1,2-diacyl-sn-glycero-3-phospho-L-serine + H(+) = a 1,2-diacyl-sn-glycero-3-phosphoethanolamine + CO2</text>
        <dbReference type="Rhea" id="RHEA:20828"/>
        <dbReference type="ChEBI" id="CHEBI:15378"/>
        <dbReference type="ChEBI" id="CHEBI:16526"/>
        <dbReference type="ChEBI" id="CHEBI:57262"/>
        <dbReference type="ChEBI" id="CHEBI:64612"/>
        <dbReference type="EC" id="4.1.1.65"/>
    </reaction>
</comment>
<comment type="cofactor">
    <cofactor evidence="1">
        <name>pyruvate</name>
        <dbReference type="ChEBI" id="CHEBI:15361"/>
    </cofactor>
    <text evidence="1">Binds 1 pyruvoyl group covalently per subunit.</text>
</comment>
<comment type="pathway">
    <text evidence="1">Phospholipid metabolism; phosphatidylethanolamine biosynthesis; phosphatidylethanolamine from CDP-diacylglycerol: step 2/2.</text>
</comment>
<comment type="subunit">
    <text evidence="1">Heterodimer of a large membrane-associated beta subunit and a small pyruvoyl-containing alpha subunit.</text>
</comment>
<comment type="subcellular location">
    <subcellularLocation>
        <location evidence="1">Cell membrane</location>
        <topology evidence="1">Peripheral membrane protein</topology>
    </subcellularLocation>
</comment>
<comment type="PTM">
    <text evidence="1">Is synthesized initially as an inactive proenzyme. Formation of the active enzyme involves a self-maturation process in which the active site pyruvoyl group is generated from an internal serine residue via an autocatalytic post-translational modification. Two non-identical subunits are generated from the proenzyme in this reaction, and the pyruvate is formed at the N-terminus of the alpha chain, which is derived from the carboxyl end of the proenzyme. The autoendoproteolytic cleavage occurs by a canonical serine protease mechanism, in which the side chain hydroxyl group of the serine supplies its oxygen atom to form the C-terminus of the beta chain, while the remainder of the serine residue undergoes an oxidative deamination to produce ammonia and the pyruvoyl prosthetic group on the alpha chain. During this reaction, the Ser that is part of the protease active site of the proenzyme becomes the pyruvoyl prosthetic group, which constitutes an essential element of the active site of the mature decarboxylase.</text>
</comment>
<comment type="similarity">
    <text evidence="1">Belongs to the phosphatidylserine decarboxylase family. PSD-B subfamily. Prokaryotic type I sub-subfamily.</text>
</comment>
<gene>
    <name evidence="1" type="primary">psd</name>
    <name type="ordered locus">EC55989_4717</name>
</gene>
<feature type="chain" id="PRO_1000147601" description="Phosphatidylserine decarboxylase beta chain" evidence="1">
    <location>
        <begin position="1"/>
        <end position="253"/>
    </location>
</feature>
<feature type="chain" id="PRO_1000147602" description="Phosphatidylserine decarboxylase alpha chain" evidence="1">
    <location>
        <begin position="254"/>
        <end position="322"/>
    </location>
</feature>
<feature type="region of interest" description="Disordered" evidence="2">
    <location>
        <begin position="293"/>
        <end position="322"/>
    </location>
</feature>
<feature type="compositionally biased region" description="Basic and acidic residues" evidence="2">
    <location>
        <begin position="308"/>
        <end position="322"/>
    </location>
</feature>
<feature type="active site" description="Charge relay system; for autoendoproteolytic cleavage activity" evidence="1">
    <location>
        <position position="90"/>
    </location>
</feature>
<feature type="active site" description="Charge relay system; for autoendoproteolytic cleavage activity" evidence="1">
    <location>
        <position position="147"/>
    </location>
</feature>
<feature type="active site" description="Charge relay system; for autoendoproteolytic cleavage activity" evidence="1">
    <location>
        <position position="254"/>
    </location>
</feature>
<feature type="active site" description="Schiff-base intermediate with substrate; via pyruvic acid; for decarboxylase activity" evidence="1">
    <location>
        <position position="254"/>
    </location>
</feature>
<feature type="site" description="Cleavage (non-hydrolytic); by autocatalysis" evidence="1">
    <location>
        <begin position="253"/>
        <end position="254"/>
    </location>
</feature>
<feature type="modified residue" description="Pyruvic acid (Ser); by autocatalysis" evidence="1">
    <location>
        <position position="254"/>
    </location>
</feature>
<name>PSD_ECO55</name>
<protein>
    <recommendedName>
        <fullName evidence="1">Phosphatidylserine decarboxylase proenzyme</fullName>
        <ecNumber evidence="1">4.1.1.65</ecNumber>
    </recommendedName>
    <component>
        <recommendedName>
            <fullName evidence="1">Phosphatidylserine decarboxylase alpha chain</fullName>
        </recommendedName>
    </component>
    <component>
        <recommendedName>
            <fullName evidence="1">Phosphatidylserine decarboxylase beta chain</fullName>
        </recommendedName>
    </component>
</protein>
<sequence length="322" mass="35933">MLNSFKLSLQYILPKLWLTRLAGWGASKRAGWLTKLVIDLFVKYYKVDMKEAQKPDTASYRTFNEFFVRPLRDEVRPIDTDPNVLVMPADGVISQLGKIEEDKILQAKGHNYSLEALLAGNYLMANLFRNGTFVTTYLSPRDYHRVHMPCNGILREMIYVPGDLFSVNHLTAQNVPNLFARNERVICLFDTEFGPMAQILVGATIVGSIETVWAGTITPPREGIIKRWTWPAGENDGSVALLKGQEMGRFKLGSTVINLFAPGKVNLVEQLESLSVTKIGQPLAVSTETFVTPDAEPAPLPAEEIEAEHDASPLVDDKKDQV</sequence>
<proteinExistence type="inferred from homology"/>
<evidence type="ECO:0000255" key="1">
    <source>
        <dbReference type="HAMAP-Rule" id="MF_00662"/>
    </source>
</evidence>
<evidence type="ECO:0000256" key="2">
    <source>
        <dbReference type="SAM" id="MobiDB-lite"/>
    </source>
</evidence>
<organism>
    <name type="scientific">Escherichia coli (strain 55989 / EAEC)</name>
    <dbReference type="NCBI Taxonomy" id="585055"/>
    <lineage>
        <taxon>Bacteria</taxon>
        <taxon>Pseudomonadati</taxon>
        <taxon>Pseudomonadota</taxon>
        <taxon>Gammaproteobacteria</taxon>
        <taxon>Enterobacterales</taxon>
        <taxon>Enterobacteriaceae</taxon>
        <taxon>Escherichia</taxon>
    </lineage>
</organism>
<dbReference type="EC" id="4.1.1.65" evidence="1"/>
<dbReference type="EMBL" id="CU928145">
    <property type="protein sequence ID" value="CAV01628.1"/>
    <property type="molecule type" value="Genomic_DNA"/>
</dbReference>
<dbReference type="SMR" id="B7LC21"/>
<dbReference type="KEGG" id="eck:EC55989_4717"/>
<dbReference type="HOGENOM" id="CLU_029061_4_1_6"/>
<dbReference type="UniPathway" id="UPA00558">
    <property type="reaction ID" value="UER00616"/>
</dbReference>
<dbReference type="Proteomes" id="UP000000746">
    <property type="component" value="Chromosome"/>
</dbReference>
<dbReference type="GO" id="GO:0005886">
    <property type="term" value="C:plasma membrane"/>
    <property type="evidence" value="ECO:0007669"/>
    <property type="project" value="UniProtKB-SubCell"/>
</dbReference>
<dbReference type="GO" id="GO:0004609">
    <property type="term" value="F:phosphatidylserine decarboxylase activity"/>
    <property type="evidence" value="ECO:0007669"/>
    <property type="project" value="UniProtKB-UniRule"/>
</dbReference>
<dbReference type="GO" id="GO:0006646">
    <property type="term" value="P:phosphatidylethanolamine biosynthetic process"/>
    <property type="evidence" value="ECO:0007669"/>
    <property type="project" value="UniProtKB-UniRule"/>
</dbReference>
<dbReference type="HAMAP" id="MF_00662">
    <property type="entry name" value="PS_decarb_PSD_B_type1"/>
    <property type="match status" value="1"/>
</dbReference>
<dbReference type="InterPro" id="IPR003817">
    <property type="entry name" value="PS_Dcarbxylase"/>
</dbReference>
<dbReference type="InterPro" id="IPR033177">
    <property type="entry name" value="PSD-B"/>
</dbReference>
<dbReference type="InterPro" id="IPR033178">
    <property type="entry name" value="PSD_type1_pro"/>
</dbReference>
<dbReference type="NCBIfam" id="TIGR00163">
    <property type="entry name" value="PS_decarb"/>
    <property type="match status" value="1"/>
</dbReference>
<dbReference type="PANTHER" id="PTHR10067">
    <property type="entry name" value="PHOSPHATIDYLSERINE DECARBOXYLASE"/>
    <property type="match status" value="1"/>
</dbReference>
<dbReference type="PANTHER" id="PTHR10067:SF6">
    <property type="entry name" value="PHOSPHATIDYLSERINE DECARBOXYLASE PROENZYME, MITOCHONDRIAL"/>
    <property type="match status" value="1"/>
</dbReference>
<dbReference type="Pfam" id="PF02666">
    <property type="entry name" value="PS_Dcarbxylase"/>
    <property type="match status" value="1"/>
</dbReference>
<accession>B7LC21</accession>